<proteinExistence type="inferred from homology"/>
<keyword id="KW-0378">Hydrolase</keyword>
<gene>
    <name type="primary">acyP</name>
    <name type="ordered locus">CPR_1940</name>
</gene>
<name>ACYP_CLOPS</name>
<sequence length="89" mass="10162">MIRKEFLVSGRVQGVGFRFFCKYQASLLSLTGYAENLDDGQVLIEVQGDESSIRKFKTKILNGNGFSRVISIDEKDLTVDTREKRFSTY</sequence>
<protein>
    <recommendedName>
        <fullName>Acylphosphatase</fullName>
        <ecNumber>3.6.1.7</ecNumber>
    </recommendedName>
    <alternativeName>
        <fullName>Acylphosphate phosphohydrolase</fullName>
    </alternativeName>
</protein>
<accession>Q0SRK7</accession>
<reference key="1">
    <citation type="journal article" date="2006" name="Genome Res.">
        <title>Skewed genomic variability in strains of the toxigenic bacterial pathogen, Clostridium perfringens.</title>
        <authorList>
            <person name="Myers G.S.A."/>
            <person name="Rasko D.A."/>
            <person name="Cheung J.K."/>
            <person name="Ravel J."/>
            <person name="Seshadri R."/>
            <person name="DeBoy R.T."/>
            <person name="Ren Q."/>
            <person name="Varga J."/>
            <person name="Awad M.M."/>
            <person name="Brinkac L.M."/>
            <person name="Daugherty S.C."/>
            <person name="Haft D.H."/>
            <person name="Dodson R.J."/>
            <person name="Madupu R."/>
            <person name="Nelson W.C."/>
            <person name="Rosovitz M.J."/>
            <person name="Sullivan S.A."/>
            <person name="Khouri H."/>
            <person name="Dimitrov G.I."/>
            <person name="Watkins K.L."/>
            <person name="Mulligan S."/>
            <person name="Benton J."/>
            <person name="Radune D."/>
            <person name="Fisher D.J."/>
            <person name="Atkins H.S."/>
            <person name="Hiscox T."/>
            <person name="Jost B.H."/>
            <person name="Billington S.J."/>
            <person name="Songer J.G."/>
            <person name="McClane B.A."/>
            <person name="Titball R.W."/>
            <person name="Rood J.I."/>
            <person name="Melville S.B."/>
            <person name="Paulsen I.T."/>
        </authorList>
    </citation>
    <scope>NUCLEOTIDE SEQUENCE [LARGE SCALE GENOMIC DNA]</scope>
    <source>
        <strain>SM101 / Type A</strain>
    </source>
</reference>
<evidence type="ECO:0000255" key="1">
    <source>
        <dbReference type="PROSITE-ProRule" id="PRU00520"/>
    </source>
</evidence>
<evidence type="ECO:0000305" key="2"/>
<comment type="catalytic activity">
    <reaction>
        <text>an acyl phosphate + H2O = a carboxylate + phosphate + H(+)</text>
        <dbReference type="Rhea" id="RHEA:14965"/>
        <dbReference type="ChEBI" id="CHEBI:15377"/>
        <dbReference type="ChEBI" id="CHEBI:15378"/>
        <dbReference type="ChEBI" id="CHEBI:29067"/>
        <dbReference type="ChEBI" id="CHEBI:43474"/>
        <dbReference type="ChEBI" id="CHEBI:59918"/>
        <dbReference type="EC" id="3.6.1.7"/>
    </reaction>
</comment>
<comment type="similarity">
    <text evidence="2">Belongs to the acylphosphatase family.</text>
</comment>
<dbReference type="EC" id="3.6.1.7"/>
<dbReference type="EMBL" id="CP000312">
    <property type="protein sequence ID" value="ABG85929.1"/>
    <property type="molecule type" value="Genomic_DNA"/>
</dbReference>
<dbReference type="RefSeq" id="WP_003461780.1">
    <property type="nucleotide sequence ID" value="NC_008262.1"/>
</dbReference>
<dbReference type="SMR" id="Q0SRK7"/>
<dbReference type="GeneID" id="93001491"/>
<dbReference type="KEGG" id="cpr:CPR_1940"/>
<dbReference type="Proteomes" id="UP000001824">
    <property type="component" value="Chromosome"/>
</dbReference>
<dbReference type="GO" id="GO:0003998">
    <property type="term" value="F:acylphosphatase activity"/>
    <property type="evidence" value="ECO:0007669"/>
    <property type="project" value="UniProtKB-EC"/>
</dbReference>
<dbReference type="Gene3D" id="3.30.70.100">
    <property type="match status" value="1"/>
</dbReference>
<dbReference type="InterPro" id="IPR020456">
    <property type="entry name" value="Acylphosphatase"/>
</dbReference>
<dbReference type="InterPro" id="IPR001792">
    <property type="entry name" value="Acylphosphatase-like_dom"/>
</dbReference>
<dbReference type="InterPro" id="IPR036046">
    <property type="entry name" value="Acylphosphatase-like_dom_sf"/>
</dbReference>
<dbReference type="InterPro" id="IPR017968">
    <property type="entry name" value="Acylphosphatase_CS"/>
</dbReference>
<dbReference type="PANTHER" id="PTHR47268">
    <property type="entry name" value="ACYLPHOSPHATASE"/>
    <property type="match status" value="1"/>
</dbReference>
<dbReference type="PANTHER" id="PTHR47268:SF4">
    <property type="entry name" value="ACYLPHOSPHATASE"/>
    <property type="match status" value="1"/>
</dbReference>
<dbReference type="Pfam" id="PF00708">
    <property type="entry name" value="Acylphosphatase"/>
    <property type="match status" value="1"/>
</dbReference>
<dbReference type="SUPFAM" id="SSF54975">
    <property type="entry name" value="Acylphosphatase/BLUF domain-like"/>
    <property type="match status" value="1"/>
</dbReference>
<dbReference type="PROSITE" id="PS00150">
    <property type="entry name" value="ACYLPHOSPHATASE_1"/>
    <property type="match status" value="1"/>
</dbReference>
<dbReference type="PROSITE" id="PS51160">
    <property type="entry name" value="ACYLPHOSPHATASE_3"/>
    <property type="match status" value="1"/>
</dbReference>
<feature type="chain" id="PRO_0000326687" description="Acylphosphatase">
    <location>
        <begin position="1"/>
        <end position="89"/>
    </location>
</feature>
<feature type="domain" description="Acylphosphatase-like" evidence="1">
    <location>
        <begin position="3"/>
        <end position="89"/>
    </location>
</feature>
<feature type="active site" evidence="1">
    <location>
        <position position="18"/>
    </location>
</feature>
<feature type="active site" evidence="1">
    <location>
        <position position="36"/>
    </location>
</feature>
<organism>
    <name type="scientific">Clostridium perfringens (strain SM101 / Type A)</name>
    <dbReference type="NCBI Taxonomy" id="289380"/>
    <lineage>
        <taxon>Bacteria</taxon>
        <taxon>Bacillati</taxon>
        <taxon>Bacillota</taxon>
        <taxon>Clostridia</taxon>
        <taxon>Eubacteriales</taxon>
        <taxon>Clostridiaceae</taxon>
        <taxon>Clostridium</taxon>
    </lineage>
</organism>